<geneLocation type="chloroplast"/>
<feature type="chain" id="PRO_0000199149" description="C-phycocyanin beta chain">
    <location>
        <begin position="1"/>
        <end position="172"/>
    </location>
</feature>
<feature type="binding site" evidence="1">
    <location>
        <position position="35"/>
    </location>
    <ligand>
        <name>(2R,3E)-phycocyanobilin</name>
        <dbReference type="ChEBI" id="CHEBI:85275"/>
        <label>1</label>
    </ligand>
</feature>
<feature type="binding site" evidence="1">
    <location>
        <position position="39"/>
    </location>
    <ligand>
        <name>(2R,3E)-phycocyanobilin</name>
        <dbReference type="ChEBI" id="CHEBI:85275"/>
        <label>1</label>
    </ligand>
</feature>
<feature type="binding site" evidence="1">
    <location>
        <position position="72"/>
    </location>
    <ligand>
        <name>(2R,3E)-phycocyanobilin</name>
        <dbReference type="ChEBI" id="CHEBI:85275"/>
        <label>2</label>
    </ligand>
</feature>
<feature type="binding site" evidence="1">
    <location>
        <position position="77"/>
    </location>
    <ligand>
        <name>(2R,3E)-phycocyanobilin</name>
        <dbReference type="ChEBI" id="CHEBI:85275"/>
        <label>2</label>
    </ligand>
</feature>
<feature type="binding site">
    <location>
        <begin position="82"/>
        <end position="88"/>
    </location>
    <ligand>
        <name>(2R,3E)-phycocyanobilin</name>
        <dbReference type="ChEBI" id="CHEBI:85275"/>
        <label>2</label>
    </ligand>
</feature>
<feature type="binding site" description="covalent" evidence="1 2">
    <location>
        <position position="82"/>
    </location>
    <ligand>
        <name>(2R,3E)-phycocyanobilin</name>
        <dbReference type="ChEBI" id="CHEBI:85275"/>
        <label>2</label>
    </ligand>
</feature>
<feature type="binding site">
    <location>
        <begin position="149"/>
        <end position="151"/>
    </location>
    <ligand>
        <name>(2R,3E)-phycocyanobilin</name>
        <dbReference type="ChEBI" id="CHEBI:85275"/>
        <label>1</label>
    </ligand>
</feature>
<feature type="binding site" description="covalent" evidence="1 2">
    <location>
        <position position="153"/>
    </location>
    <ligand>
        <name>(2R,3E)-phycocyanobilin</name>
        <dbReference type="ChEBI" id="CHEBI:85275"/>
        <label>1</label>
    </ligand>
</feature>
<feature type="modified residue" description="N4-methylasparagine" evidence="1">
    <location>
        <position position="72"/>
    </location>
</feature>
<feature type="sequence conflict" description="In Ref. 2; AAB01592." evidence="4" ref="2">
    <original>N</original>
    <variation>I</variation>
    <location>
        <position position="72"/>
    </location>
</feature>
<feature type="sequence conflict" description="In Ref. 2; AAB34027 and 1; no nucleotide entry." evidence="4" ref="2 1">
    <original>N</original>
    <variation>T</variation>
    <location>
        <position position="72"/>
    </location>
</feature>
<feature type="sequence conflict" description="In Ref. 2; AAB01592." evidence="4" ref="2">
    <original>I</original>
    <variation>V</variation>
    <location>
        <position position="104"/>
    </location>
</feature>
<feature type="helix" evidence="8">
    <location>
        <begin position="4"/>
        <end position="14"/>
    </location>
</feature>
<feature type="helix" evidence="8">
    <location>
        <begin position="21"/>
        <end position="32"/>
    </location>
</feature>
<feature type="helix" evidence="8">
    <location>
        <begin position="34"/>
        <end position="46"/>
    </location>
</feature>
<feature type="helix" evidence="8">
    <location>
        <begin position="48"/>
        <end position="62"/>
    </location>
</feature>
<feature type="helix" evidence="8">
    <location>
        <begin position="64"/>
        <end position="66"/>
    </location>
</feature>
<feature type="helix" evidence="8">
    <location>
        <begin position="76"/>
        <end position="99"/>
    </location>
</feature>
<feature type="helix" evidence="8">
    <location>
        <begin position="103"/>
        <end position="108"/>
    </location>
</feature>
<feature type="turn" evidence="8">
    <location>
        <begin position="109"/>
        <end position="112"/>
    </location>
</feature>
<feature type="helix" evidence="8">
    <location>
        <begin position="113"/>
        <end position="120"/>
    </location>
</feature>
<feature type="helix" evidence="8">
    <location>
        <begin position="124"/>
        <end position="142"/>
    </location>
</feature>
<feature type="helix" evidence="8">
    <location>
        <begin position="154"/>
        <end position="170"/>
    </location>
</feature>
<reference key="1">
    <citation type="journal article" date="1981" name="J. Biol. Chem.">
        <title>Primary structure of phycocyanin from the unicellular rhodophyte Cyanidium caldarium. II. Complete amino acid sequence of the beta subunit.</title>
        <authorList>
            <person name="Troxler R.F."/>
            <person name="Ehrhardt M.M."/>
            <person name="Brown-Mason A.S."/>
            <person name="Offner G.D."/>
        </authorList>
    </citation>
    <scope>PROTEIN SEQUENCE</scope>
    <scope>SUBUNIT</scope>
</reference>
<reference key="2">
    <citation type="journal article" date="1995" name="Plant Physiol.">
        <title>Nucleotide sequence and expression of the genes for the alpha and beta subunits of phycocyanin in Cyanidium caldarium.</title>
        <authorList>
            <person name="Troxler R.F."/>
            <person name="Yan Y."/>
            <person name="Jiang J.W."/>
            <person name="Liu B."/>
        </authorList>
    </citation>
    <scope>NUCLEOTIDE SEQUENCE [MRNA]</scope>
    <source>
        <strain>III-D-2</strain>
    </source>
</reference>
<reference key="3">
    <citation type="submission" date="1993-07" db="EMBL/GenBank/DDBJ databases">
        <title>Heme regulated photogenes in the unicellular rhodophyte, Cyanidium caldarium. Cloning and nucleotide sequence of genes for phycocyanin.</title>
        <authorList>
            <person name="Troxler R.F."/>
            <person name="Yan Y."/>
            <person name="Zhang F."/>
            <person name="Jiang J.-W."/>
        </authorList>
    </citation>
    <scope>NUCLEOTIDE SEQUENCE [GENOMIC DNA]</scope>
    <source>
        <strain>III-D-2</strain>
    </source>
</reference>
<reference key="4">
    <citation type="journal article" date="1979" name="J. Biol. Chem.">
        <title>Phycobilin-apoprotein linkages in the alpha and beta subunits of phycocyanin from the unicellular rhodophyte, Cyanidium caldarium. Amino acid sequences of 35S-labeled chromopeptides.</title>
        <authorList>
            <person name="Brown A.S."/>
            <person name="Offner G.D."/>
            <person name="Ehrhardt M.M."/>
            <person name="Troxler R.F."/>
        </authorList>
    </citation>
    <scope>PROTEIN SEQUENCE OF 80-86 AND 136-166</scope>
    <scope>SUBUNIT</scope>
    <scope>CHROMOPHORE ATTACHMENT AT CYS-82 AND CYS-153</scope>
    <source>
        <strain>Allen</strain>
    </source>
</reference>
<reference evidence="5" key="5">
    <citation type="journal article" date="1999" name="Biophys. J.">
        <title>Crystal structure of C-phycocyanin from Cyanidium caldarium provides a new perspective on phycobilisome assembly.</title>
        <authorList>
            <person name="Stec B."/>
            <person name="Troxler R.F."/>
            <person name="Teeter M.M."/>
        </authorList>
    </citation>
    <scope>X-RAY CRYSTALLOGRAPHY (1.65 ANGSTROMS) IN COMPLEX WITH CPCA AND PHYCOCYANOBILIN</scope>
    <scope>SUBUNIT</scope>
    <scope>METHYLATION AT ASN-72</scope>
</reference>
<reference evidence="6" key="6">
    <citation type="submission" date="2007-12" db="PDB data bank">
        <title>Crystal Structure of C-Phycocyanin from Galdieria sulphuraria at 1.85 A.</title>
        <authorList>
            <person name="Fromme R."/>
            <person name="Thangaraj B."/>
            <person name="Vanselow C."/>
            <person name="Fromme P."/>
        </authorList>
    </citation>
    <scope>X-RAY CRYSTALLOGRAPHY (1.85 ANGSTROMS)</scope>
</reference>
<reference evidence="7" key="7">
    <citation type="submission" date="2009-11" db="PDB data bank">
        <title>High resolution structure of C-Phycocyanin from Galdieria sulphuraria reveals new insights of the Phycobilisome.</title>
        <authorList>
            <person name="Fromme R."/>
            <person name="Thangaraj B."/>
            <person name="Vanselow C."/>
            <person name="Fromme P."/>
        </authorList>
    </citation>
    <scope>X-RAY CRYSTALLOGRAPHY (1.50 ANGSTROMS)</scope>
</reference>
<comment type="function">
    <text>Light-harvesting photosynthetic tetrapyrrole chromophore-protein from the phycobiliprotein complex (phycobilisome, PBS). Phycocyanin is the major phycobiliprotein in the PBS rod.</text>
</comment>
<comment type="subunit">
    <text evidence="1 2 3">Heterodimer of an alpha and a beta subunit (PubMed:10354419, PubMed:468790, PubMed:7028751). Dimers further assemble into trimers and the trimers into hexamers. The basic functional unit of phycobiliproteins is a ring-shaped hexamer formed from two back-to-back trimers contacting via the alpha chain subunits. The trimers are composed of alpha/beta subunit heterodimers arranged around a three-fold axis of symmetry. The phycoerythrins also contain a gamma subunit which is located in the center of the hexamer (PubMed:10354419).</text>
</comment>
<comment type="subcellular location">
    <subcellularLocation>
        <location>Plastid</location>
        <location>Chloroplast thylakoid membrane</location>
        <topology>Peripheral membrane protein</topology>
        <orientation>Stromal side</orientation>
    </subcellularLocation>
    <text>Part of the phycobilisome rod.</text>
</comment>
<comment type="PTM">
    <text evidence="2">Contains two covalently linked phycocyanobilin chromophores.</text>
</comment>
<comment type="miscellaneous">
    <text>The light-harvesting antenna system in red algae and cyanobacteria is formed of phycobilisomes. These are composed of the phycobiliproteins phycoerythrin (CPE), phycocyanin (CPC) and allophycocyanin (APC). Cyanobacteria also contain phycoerythrocyanin (PCC). The phycobiliproteins all share the same subunit composition and organization with variations in the covalently bound open-chain tetrapyrrole chromophores. The phycobiliprotein complexes are arranged sequentially in antenna complexes linked by linker proteins with CPE at the periphery, CPC in the middle and APC at the core feeding to the photosynthetic reaction center.</text>
</comment>
<comment type="miscellaneous">
    <text evidence="4">Although originally identified as Cyanidium caldarium, these sequences derive from Galdieria sulphuraria.</text>
</comment>
<comment type="similarity">
    <text evidence="4">Belongs to the phycobiliprotein family.</text>
</comment>
<dbReference type="EMBL" id="S77125">
    <property type="protein sequence ID" value="AAB34027.2"/>
    <property type="molecule type" value="mRNA"/>
</dbReference>
<dbReference type="EMBL" id="L13467">
    <property type="protein sequence ID" value="AAB01592.1"/>
    <property type="molecule type" value="Genomic_DNA"/>
</dbReference>
<dbReference type="PIR" id="A00320">
    <property type="entry name" value="CFKKB"/>
</dbReference>
<dbReference type="PDB" id="1PHN">
    <property type="method" value="X-ray"/>
    <property type="resolution" value="1.65 A"/>
    <property type="chains" value="B=1-172"/>
</dbReference>
<dbReference type="PDB" id="3BRP">
    <property type="method" value="X-ray"/>
    <property type="resolution" value="1.85 A"/>
    <property type="chains" value="B=1-172"/>
</dbReference>
<dbReference type="PDB" id="3KVS">
    <property type="method" value="X-ray"/>
    <property type="resolution" value="1.50 A"/>
    <property type="chains" value="B=1-172"/>
</dbReference>
<dbReference type="PDBsum" id="1PHN"/>
<dbReference type="PDBsum" id="3BRP"/>
<dbReference type="PDBsum" id="3KVS"/>
<dbReference type="SMR" id="P00311"/>
<dbReference type="MINT" id="P00311"/>
<dbReference type="iPTMnet" id="P00311"/>
<dbReference type="eggNOG" id="ENOG502SQCB">
    <property type="taxonomic scope" value="Eukaryota"/>
</dbReference>
<dbReference type="EvolutionaryTrace" id="P00311"/>
<dbReference type="GO" id="GO:0009535">
    <property type="term" value="C:chloroplast thylakoid membrane"/>
    <property type="evidence" value="ECO:0007669"/>
    <property type="project" value="UniProtKB-SubCell"/>
</dbReference>
<dbReference type="GO" id="GO:0030089">
    <property type="term" value="C:phycobilisome"/>
    <property type="evidence" value="ECO:0007669"/>
    <property type="project" value="UniProtKB-KW"/>
</dbReference>
<dbReference type="GO" id="GO:0015979">
    <property type="term" value="P:photosynthesis"/>
    <property type="evidence" value="ECO:0007669"/>
    <property type="project" value="UniProtKB-KW"/>
</dbReference>
<dbReference type="CDD" id="cd14768">
    <property type="entry name" value="PC_PEC_beta"/>
    <property type="match status" value="1"/>
</dbReference>
<dbReference type="Gene3D" id="1.10.490.20">
    <property type="entry name" value="Phycocyanins"/>
    <property type="match status" value="1"/>
</dbReference>
<dbReference type="InterPro" id="IPR009050">
    <property type="entry name" value="Globin-like_sf"/>
</dbReference>
<dbReference type="InterPro" id="IPR012128">
    <property type="entry name" value="Phycobilisome_asu/bsu"/>
</dbReference>
<dbReference type="InterPro" id="IPR038719">
    <property type="entry name" value="Phycobilisome_asu/bsu_sf"/>
</dbReference>
<dbReference type="InterPro" id="IPR006247">
    <property type="entry name" value="Phycocyanin_b"/>
</dbReference>
<dbReference type="NCBIfam" id="TIGR01339">
    <property type="entry name" value="phycocy_beta"/>
    <property type="match status" value="1"/>
</dbReference>
<dbReference type="PANTHER" id="PTHR34011:SF7">
    <property type="entry name" value="C-PHYCOCYANIN BETA SUBUNIT"/>
    <property type="match status" value="1"/>
</dbReference>
<dbReference type="PANTHER" id="PTHR34011">
    <property type="entry name" value="PHYCOBILISOME 32.1 KDA LINKER POLYPEPTIDE, PHYCOCYANIN-ASSOCIATED, ROD 2-RELATED"/>
    <property type="match status" value="1"/>
</dbReference>
<dbReference type="Pfam" id="PF00502">
    <property type="entry name" value="Phycobilisome"/>
    <property type="match status" value="1"/>
</dbReference>
<dbReference type="PIRSF" id="PIRSF000081">
    <property type="entry name" value="Phycocyanin"/>
    <property type="match status" value="1"/>
</dbReference>
<dbReference type="SUPFAM" id="SSF46458">
    <property type="entry name" value="Globin-like"/>
    <property type="match status" value="1"/>
</dbReference>
<name>PHCB_GALSU</name>
<sequence length="172" mass="18253">MLDAFAKVVAQADARGEFLSNTQLDALSKMVSEGNKRLDVVNRITSNASAIVTNAARALFSEQPQLIQPGGNAYTNRRMAACLRDMEIILRYVSYAIIAGDSSILDDRCLNGLRETYQALGVPGASVAVGIEKMKDSAIAIANDPSGITTGDCSALMAEVGTYFDRAATAVQ</sequence>
<keyword id="KW-0002">3D-structure</keyword>
<keyword id="KW-0042">Antenna complex</keyword>
<keyword id="KW-0089">Bile pigment</keyword>
<keyword id="KW-0150">Chloroplast</keyword>
<keyword id="KW-0157">Chromophore</keyword>
<keyword id="KW-0903">Direct protein sequencing</keyword>
<keyword id="KW-0249">Electron transport</keyword>
<keyword id="KW-0472">Membrane</keyword>
<keyword id="KW-0488">Methylation</keyword>
<keyword id="KW-0602">Photosynthesis</keyword>
<keyword id="KW-0605">Phycobilisome</keyword>
<keyword id="KW-0934">Plastid</keyword>
<keyword id="KW-0793">Thylakoid</keyword>
<keyword id="KW-0813">Transport</keyword>
<evidence type="ECO:0000269" key="1">
    <source>
    </source>
</evidence>
<evidence type="ECO:0000269" key="2">
    <source>
    </source>
</evidence>
<evidence type="ECO:0000269" key="3">
    <source>
    </source>
</evidence>
<evidence type="ECO:0000305" key="4"/>
<evidence type="ECO:0007744" key="5">
    <source>
        <dbReference type="PDB" id="1PHN"/>
    </source>
</evidence>
<evidence type="ECO:0007744" key="6">
    <source>
        <dbReference type="PDB" id="3BRP"/>
    </source>
</evidence>
<evidence type="ECO:0007744" key="7">
    <source>
        <dbReference type="PDB" id="3KVS"/>
    </source>
</evidence>
<evidence type="ECO:0007829" key="8">
    <source>
        <dbReference type="PDB" id="3KVS"/>
    </source>
</evidence>
<gene>
    <name type="primary">cpcB</name>
</gene>
<protein>
    <recommendedName>
        <fullName>C-phycocyanin beta chain</fullName>
    </recommendedName>
</protein>
<organism>
    <name type="scientific">Galdieria sulphuraria</name>
    <name type="common">Red alga</name>
    <dbReference type="NCBI Taxonomy" id="130081"/>
    <lineage>
        <taxon>Eukaryota</taxon>
        <taxon>Rhodophyta</taxon>
        <taxon>Bangiophyceae</taxon>
        <taxon>Galdieriales</taxon>
        <taxon>Galdieriaceae</taxon>
        <taxon>Galdieria</taxon>
    </lineage>
</organism>
<proteinExistence type="evidence at protein level"/>
<accession>P00311</accession>